<proteinExistence type="evidence at protein level"/>
<comment type="function">
    <text evidence="1">Catalyzes the formation of the alpha-1,6-glucosidic linkages in glycogen by scission of a 1,4-alpha-linked oligosaccharide from growing alpha-1,4-glucan chains and the subsequent attachment of the oligosaccharide to the alpha-1,6 position.</text>
</comment>
<comment type="catalytic activity">
    <reaction>
        <text>Transfers a segment of a (1-&gt;4)-alpha-D-glucan chain to a primary hydroxy group in a similar glucan chain.</text>
        <dbReference type="EC" id="2.4.1.18"/>
    </reaction>
</comment>
<comment type="biophysicochemical properties">
    <temperatureDependence>
        <text>Optimum temperature is about 35 degrees Celsius.</text>
    </temperatureDependence>
</comment>
<comment type="pathway">
    <text>Glycan biosynthesis; glycogen biosynthesis.</text>
</comment>
<comment type="subunit">
    <text>Monomer.</text>
</comment>
<comment type="similarity">
    <text evidence="2">Belongs to the glycosyl hydrolase 13 family. GlgB subfamily.</text>
</comment>
<organism>
    <name type="scientific">Synechococcus elongatus (strain ATCC 33912 / PCC 7942 / FACHB-805)</name>
    <name type="common">Anacystis nidulans R2</name>
    <dbReference type="NCBI Taxonomy" id="1140"/>
    <lineage>
        <taxon>Bacteria</taxon>
        <taxon>Bacillati</taxon>
        <taxon>Cyanobacteriota</taxon>
        <taxon>Cyanophyceae</taxon>
        <taxon>Synechococcales</taxon>
        <taxon>Synechococcaceae</taxon>
        <taxon>Synechococcus</taxon>
    </lineage>
</organism>
<feature type="initiator methionine" description="Removed">
    <location>
        <position position="1"/>
    </location>
</feature>
<feature type="chain" id="PRO_0000188756" description="1,4-alpha-glucan branching enzyme GlgB">
    <location>
        <begin position="2"/>
        <end position="774"/>
    </location>
</feature>
<feature type="active site" description="Nucleophile" evidence="1">
    <location>
        <position position="440"/>
    </location>
</feature>
<feature type="active site" description="Proton donor" evidence="1">
    <location>
        <position position="493"/>
    </location>
</feature>
<sequence>MTGTTPLPSSSLSVEQVNRIASNQEQNPFDILGPHPYEHEGQAGWVIRAYLPEAQEAAVICPALRREFAMHPVHHPHFFETWVPEETLEIYQLRITEGERERIIYDPYAFRSPLLTDYDIHLFAEGNHHRIYEKLGAHPCELENVAGVNFAVWAPSARNVSILGDFNSWDGRKHQMARRSNGIWELFIPELTVGAAYKYEIKNYDGHIYEKSDPYGFQQEVRPKTASIVADLDRYTWGDADWLERRRHQEPLRQPISVYEVHLGSWMHASSDAIATDAQGKPLPPVPVADLKPGARFLTYRELADRLIPYVLDLGYSHIELLPIAEHPFDGSWGYQVTGYYAATSRYGSPEDFMYFVDRCHQNGIGVILDWVPGHFPKDGHGLAFFDGTHLYEHADSRQGEHREWGTLVFNYGRHEVRNFLAANALFWFDKYHIDGIRVDAVASMLYLDYNRKEGEWIPNEYGGRENIEAADFLRQVNHLIFSYFPGALSIAEESTSWPMVSWPTYVGGLGFNLKWNMGWMHDMLDYFSMDPWFRQFHQNNVTFSIWYAFSENFMLALSHDEVVHGKSNLIGKMPGDEWQKFANLRCLLGYMFTHPGKKTLFMGMEFGQWAEWNVWGDLEWHLLQYEPHQGLKQFVKDLNHLYRNAPALYSEDCNQAGFEWIDCSDNRHSIVSFIRRAHESDRFLVVVCNFTPQPHAHYRIGVPVAGFYREIFNSDARSYGGSNMGNLGGKWTDEWSCHNRPYSLDLCLPPLTTLVLELASGPESLSEAANSPL</sequence>
<name>GLGB_SYNE7</name>
<evidence type="ECO:0000250" key="1"/>
<evidence type="ECO:0000305" key="2"/>
<dbReference type="EC" id="2.4.1.18"/>
<dbReference type="EMBL" id="M31544">
    <property type="protein sequence ID" value="AAB39038.1"/>
    <property type="molecule type" value="Genomic_DNA"/>
</dbReference>
<dbReference type="EMBL" id="CP000100">
    <property type="protein sequence ID" value="ABB57115.1"/>
    <property type="molecule type" value="Genomic_DNA"/>
</dbReference>
<dbReference type="PIR" id="JQ0550">
    <property type="entry name" value="JQ0550"/>
</dbReference>
<dbReference type="RefSeq" id="WP_011242776.1">
    <property type="nucleotide sequence ID" value="NZ_JACJTX010000003.1"/>
</dbReference>
<dbReference type="SMR" id="P16954"/>
<dbReference type="STRING" id="1140.Synpcc7942_1085"/>
<dbReference type="CAZy" id="CBM48">
    <property type="family name" value="Carbohydrate-Binding Module Family 48"/>
</dbReference>
<dbReference type="CAZy" id="GH13">
    <property type="family name" value="Glycoside Hydrolase Family 13"/>
</dbReference>
<dbReference type="PaxDb" id="1140-Synpcc7942_1085"/>
<dbReference type="GeneID" id="72429938"/>
<dbReference type="KEGG" id="syf:Synpcc7942_1085"/>
<dbReference type="eggNOG" id="COG0296">
    <property type="taxonomic scope" value="Bacteria"/>
</dbReference>
<dbReference type="HOGENOM" id="CLU_004245_3_2_3"/>
<dbReference type="OrthoDB" id="9800174at2"/>
<dbReference type="BioCyc" id="SYNEL:SYNPCC7942_1085-MONOMER"/>
<dbReference type="BRENDA" id="2.4.1.18">
    <property type="organism ID" value="7781"/>
</dbReference>
<dbReference type="UniPathway" id="UPA00164"/>
<dbReference type="Proteomes" id="UP000889800">
    <property type="component" value="Chromosome"/>
</dbReference>
<dbReference type="GO" id="GO:0005829">
    <property type="term" value="C:cytosol"/>
    <property type="evidence" value="ECO:0007669"/>
    <property type="project" value="TreeGrafter"/>
</dbReference>
<dbReference type="GO" id="GO:0003844">
    <property type="term" value="F:1,4-alpha-glucan branching enzyme activity"/>
    <property type="evidence" value="ECO:0007669"/>
    <property type="project" value="UniProtKB-UniRule"/>
</dbReference>
<dbReference type="GO" id="GO:0043169">
    <property type="term" value="F:cation binding"/>
    <property type="evidence" value="ECO:0007669"/>
    <property type="project" value="InterPro"/>
</dbReference>
<dbReference type="GO" id="GO:0004553">
    <property type="term" value="F:hydrolase activity, hydrolyzing O-glycosyl compounds"/>
    <property type="evidence" value="ECO:0007669"/>
    <property type="project" value="InterPro"/>
</dbReference>
<dbReference type="GO" id="GO:0005978">
    <property type="term" value="P:glycogen biosynthetic process"/>
    <property type="evidence" value="ECO:0007669"/>
    <property type="project" value="UniProtKB-UniRule"/>
</dbReference>
<dbReference type="CDD" id="cd11322">
    <property type="entry name" value="AmyAc_Glg_BE"/>
    <property type="match status" value="1"/>
</dbReference>
<dbReference type="CDD" id="cd02855">
    <property type="entry name" value="E_set_GBE_prok_N"/>
    <property type="match status" value="1"/>
</dbReference>
<dbReference type="FunFam" id="2.60.40.10:FF:000169">
    <property type="entry name" value="1,4-alpha-glucan branching enzyme GlgB"/>
    <property type="match status" value="1"/>
</dbReference>
<dbReference type="FunFam" id="2.60.40.1180:FF:000002">
    <property type="entry name" value="1,4-alpha-glucan branching enzyme GlgB"/>
    <property type="match status" value="1"/>
</dbReference>
<dbReference type="FunFam" id="3.20.20.80:FF:000003">
    <property type="entry name" value="1,4-alpha-glucan branching enzyme GlgB"/>
    <property type="match status" value="1"/>
</dbReference>
<dbReference type="Gene3D" id="3.20.20.80">
    <property type="entry name" value="Glycosidases"/>
    <property type="match status" value="1"/>
</dbReference>
<dbReference type="Gene3D" id="2.60.40.1180">
    <property type="entry name" value="Golgi alpha-mannosidase II"/>
    <property type="match status" value="1"/>
</dbReference>
<dbReference type="Gene3D" id="2.60.40.10">
    <property type="entry name" value="Immunoglobulins"/>
    <property type="match status" value="2"/>
</dbReference>
<dbReference type="HAMAP" id="MF_00685">
    <property type="entry name" value="GlgB"/>
    <property type="match status" value="1"/>
</dbReference>
<dbReference type="InterPro" id="IPR006048">
    <property type="entry name" value="A-amylase/branching_C"/>
</dbReference>
<dbReference type="InterPro" id="IPR037439">
    <property type="entry name" value="Branching_enzy"/>
</dbReference>
<dbReference type="InterPro" id="IPR006407">
    <property type="entry name" value="GlgB"/>
</dbReference>
<dbReference type="InterPro" id="IPR054169">
    <property type="entry name" value="GlgB_N"/>
</dbReference>
<dbReference type="InterPro" id="IPR044143">
    <property type="entry name" value="GlgB_N_E_set_prok"/>
</dbReference>
<dbReference type="InterPro" id="IPR006047">
    <property type="entry name" value="Glyco_hydro_13_cat_dom"/>
</dbReference>
<dbReference type="InterPro" id="IPR004193">
    <property type="entry name" value="Glyco_hydro_13_N"/>
</dbReference>
<dbReference type="InterPro" id="IPR013780">
    <property type="entry name" value="Glyco_hydro_b"/>
</dbReference>
<dbReference type="InterPro" id="IPR017853">
    <property type="entry name" value="Glycoside_hydrolase_SF"/>
</dbReference>
<dbReference type="InterPro" id="IPR013783">
    <property type="entry name" value="Ig-like_fold"/>
</dbReference>
<dbReference type="InterPro" id="IPR014756">
    <property type="entry name" value="Ig_E-set"/>
</dbReference>
<dbReference type="NCBIfam" id="TIGR01515">
    <property type="entry name" value="branching_enzym"/>
    <property type="match status" value="1"/>
</dbReference>
<dbReference type="NCBIfam" id="NF003811">
    <property type="entry name" value="PRK05402.1"/>
    <property type="match status" value="1"/>
</dbReference>
<dbReference type="NCBIfam" id="NF008967">
    <property type="entry name" value="PRK12313.1"/>
    <property type="match status" value="1"/>
</dbReference>
<dbReference type="PANTHER" id="PTHR43651">
    <property type="entry name" value="1,4-ALPHA-GLUCAN-BRANCHING ENZYME"/>
    <property type="match status" value="1"/>
</dbReference>
<dbReference type="PANTHER" id="PTHR43651:SF3">
    <property type="entry name" value="1,4-ALPHA-GLUCAN-BRANCHING ENZYME"/>
    <property type="match status" value="1"/>
</dbReference>
<dbReference type="Pfam" id="PF00128">
    <property type="entry name" value="Alpha-amylase"/>
    <property type="match status" value="2"/>
</dbReference>
<dbReference type="Pfam" id="PF02806">
    <property type="entry name" value="Alpha-amylase_C"/>
    <property type="match status" value="1"/>
</dbReference>
<dbReference type="Pfam" id="PF02922">
    <property type="entry name" value="CBM_48"/>
    <property type="match status" value="1"/>
</dbReference>
<dbReference type="Pfam" id="PF22019">
    <property type="entry name" value="GlgB_N"/>
    <property type="match status" value="1"/>
</dbReference>
<dbReference type="PIRSF" id="PIRSF000463">
    <property type="entry name" value="GlgB"/>
    <property type="match status" value="1"/>
</dbReference>
<dbReference type="SMART" id="SM00642">
    <property type="entry name" value="Aamy"/>
    <property type="match status" value="1"/>
</dbReference>
<dbReference type="SUPFAM" id="SSF51445">
    <property type="entry name" value="(Trans)glycosidases"/>
    <property type="match status" value="1"/>
</dbReference>
<dbReference type="SUPFAM" id="SSF81296">
    <property type="entry name" value="E set domains"/>
    <property type="match status" value="2"/>
</dbReference>
<dbReference type="SUPFAM" id="SSF51011">
    <property type="entry name" value="Glycosyl hydrolase domain"/>
    <property type="match status" value="1"/>
</dbReference>
<keyword id="KW-0119">Carbohydrate metabolism</keyword>
<keyword id="KW-0320">Glycogen biosynthesis</keyword>
<keyword id="KW-0321">Glycogen metabolism</keyword>
<keyword id="KW-0328">Glycosyltransferase</keyword>
<keyword id="KW-1185">Reference proteome</keyword>
<keyword id="KW-0808">Transferase</keyword>
<accession>P16954</accession>
<accession>Q31PA4</accession>
<reference key="1">
    <citation type="journal article" date="1990" name="Gene">
        <title>Nucleotide sequence of the Synechococcus sp. PCC7942 branching enzyme gene (glgB): expression in Bacillus subtilis.</title>
        <authorList>
            <person name="Kiel J.A.K.W."/>
            <person name="Boels J.M."/>
            <person name="Beldman G."/>
            <person name="Venema G."/>
        </authorList>
    </citation>
    <scope>NUCLEOTIDE SEQUENCE [GENOMIC DNA]</scope>
</reference>
<reference key="2">
    <citation type="submission" date="2005-08" db="EMBL/GenBank/DDBJ databases">
        <title>Complete sequence of chromosome 1 of Synechococcus elongatus PCC 7942.</title>
        <authorList>
            <consortium name="US DOE Joint Genome Institute"/>
            <person name="Copeland A."/>
            <person name="Lucas S."/>
            <person name="Lapidus A."/>
            <person name="Barry K."/>
            <person name="Detter J.C."/>
            <person name="Glavina T."/>
            <person name="Hammon N."/>
            <person name="Israni S."/>
            <person name="Pitluck S."/>
            <person name="Schmutz J."/>
            <person name="Larimer F."/>
            <person name="Land M."/>
            <person name="Kyrpides N."/>
            <person name="Lykidis A."/>
            <person name="Golden S."/>
            <person name="Richardson P."/>
        </authorList>
    </citation>
    <scope>NUCLEOTIDE SEQUENCE [LARGE SCALE GENOMIC DNA]</scope>
    <source>
        <strain>ATCC 33912 / PCC 7942 / FACHB-805</strain>
    </source>
</reference>
<gene>
    <name type="primary">glgB</name>
    <name type="ordered locus">Synpcc7942_1085</name>
</gene>
<protein>
    <recommendedName>
        <fullName>1,4-alpha-glucan branching enzyme GlgB</fullName>
        <ecNumber>2.4.1.18</ecNumber>
    </recommendedName>
    <alternativeName>
        <fullName>1,4-alpha-D-glucan:1,4-alpha-D-glucan 6-glucosyl-transferase</fullName>
    </alternativeName>
    <alternativeName>
        <fullName>Alpha-(1-&gt;4)-glucan branching enzyme</fullName>
    </alternativeName>
    <alternativeName>
        <fullName>Glycogen branching enzyme</fullName>
        <shortName>BE</shortName>
    </alternativeName>
</protein>